<reference key="1">
    <citation type="journal article" date="2004" name="Nature">
        <title>Genome evolution in yeasts.</title>
        <authorList>
            <person name="Dujon B."/>
            <person name="Sherman D."/>
            <person name="Fischer G."/>
            <person name="Durrens P."/>
            <person name="Casaregola S."/>
            <person name="Lafontaine I."/>
            <person name="de Montigny J."/>
            <person name="Marck C."/>
            <person name="Neuveglise C."/>
            <person name="Talla E."/>
            <person name="Goffard N."/>
            <person name="Frangeul L."/>
            <person name="Aigle M."/>
            <person name="Anthouard V."/>
            <person name="Babour A."/>
            <person name="Barbe V."/>
            <person name="Barnay S."/>
            <person name="Blanchin S."/>
            <person name="Beckerich J.-M."/>
            <person name="Beyne E."/>
            <person name="Bleykasten C."/>
            <person name="Boisrame A."/>
            <person name="Boyer J."/>
            <person name="Cattolico L."/>
            <person name="Confanioleri F."/>
            <person name="de Daruvar A."/>
            <person name="Despons L."/>
            <person name="Fabre E."/>
            <person name="Fairhead C."/>
            <person name="Ferry-Dumazet H."/>
            <person name="Groppi A."/>
            <person name="Hantraye F."/>
            <person name="Hennequin C."/>
            <person name="Jauniaux N."/>
            <person name="Joyet P."/>
            <person name="Kachouri R."/>
            <person name="Kerrest A."/>
            <person name="Koszul R."/>
            <person name="Lemaire M."/>
            <person name="Lesur I."/>
            <person name="Ma L."/>
            <person name="Muller H."/>
            <person name="Nicaud J.-M."/>
            <person name="Nikolski M."/>
            <person name="Oztas S."/>
            <person name="Ozier-Kalogeropoulos O."/>
            <person name="Pellenz S."/>
            <person name="Potier S."/>
            <person name="Richard G.-F."/>
            <person name="Straub M.-L."/>
            <person name="Suleau A."/>
            <person name="Swennen D."/>
            <person name="Tekaia F."/>
            <person name="Wesolowski-Louvel M."/>
            <person name="Westhof E."/>
            <person name="Wirth B."/>
            <person name="Zeniou-Meyer M."/>
            <person name="Zivanovic Y."/>
            <person name="Bolotin-Fukuhara M."/>
            <person name="Thierry A."/>
            <person name="Bouchier C."/>
            <person name="Caudron B."/>
            <person name="Scarpelli C."/>
            <person name="Gaillardin C."/>
            <person name="Weissenbach J."/>
            <person name="Wincker P."/>
            <person name="Souciet J.-L."/>
        </authorList>
    </citation>
    <scope>NUCLEOTIDE SEQUENCE [LARGE SCALE GENOMIC DNA]</scope>
    <source>
        <strain>ATCC 2001 / BCRC 20586 / JCM 3761 / NBRC 0622 / NRRL Y-65 / CBS 138</strain>
    </source>
</reference>
<accession>Q6FIK2</accession>
<proteinExistence type="inferred from homology"/>
<gene>
    <name type="primary">YME2</name>
    <name type="ordered locus">CAGL0M13761g</name>
</gene>
<feature type="transit peptide" description="Mitochondrion" evidence="2">
    <location>
        <begin position="1"/>
        <end position="42"/>
    </location>
</feature>
<feature type="chain" id="PRO_0000343118" description="Mitochondrial escape protein 2">
    <location>
        <begin position="43"/>
        <end position="848"/>
    </location>
</feature>
<feature type="topological domain" description="Mitochondrial matrix" evidence="2">
    <location>
        <begin position="43"/>
        <end position="284"/>
    </location>
</feature>
<feature type="transmembrane region" description="Helical" evidence="2">
    <location>
        <begin position="285"/>
        <end position="305"/>
    </location>
</feature>
<feature type="topological domain" description="Mitochondrial intermembrane" evidence="2">
    <location>
        <begin position="306"/>
        <end position="848"/>
    </location>
</feature>
<feature type="domain" description="RRM">
    <location>
        <begin position="196"/>
        <end position="269"/>
    </location>
</feature>
<feature type="region of interest" description="Disordered" evidence="3">
    <location>
        <begin position="603"/>
        <end position="627"/>
    </location>
</feature>
<feature type="compositionally biased region" description="Basic and acidic residues" evidence="3">
    <location>
        <begin position="613"/>
        <end position="627"/>
    </location>
</feature>
<keyword id="KW-0472">Membrane</keyword>
<keyword id="KW-0496">Mitochondrion</keyword>
<keyword id="KW-0999">Mitochondrion inner membrane</keyword>
<keyword id="KW-0507">mRNA processing</keyword>
<keyword id="KW-1185">Reference proteome</keyword>
<keyword id="KW-0694">RNA-binding</keyword>
<keyword id="KW-0809">Transit peptide</keyword>
<keyword id="KW-0812">Transmembrane</keyword>
<keyword id="KW-1133">Transmembrane helix</keyword>
<sequence length="848" mass="97863">MNSITTPRMGATILRTIAPNVGVLSQVLPLGLRRVYPRGVRWVSSEIQQKDRQAGESNTATDTGVIHKTEQETLLYFDNVYARATSLWNPALWYNVLLRNQSRESVREKIKNLASPPDNPIHGLQLRSTIPVKRDGGVFATFLVPFNYTKAEVNTMIQQNTLNESKNSLFSYFTRATAFPVKGSPWIEDLKRLPSTTVIIKCQGPPLTEEEIYSLFRRYGTIIDIFPPNDTNKHFRVKYRSYRGAICAKNCVSGIEIHNTVLHLQYENVVKGHLIRNFYVTHTRIAIPVTFALLSILAVLIFDPIREFFIEQKITHQYQISWDNRYLKQLKNLTNSTVSTFKNYWGYDSSIISKRHLWEERIEKMDDLKMWLEENNNTFVLIRGPRGSGKHELVMQHTLHNRNNVLYIDCDKLIKSRTDAKFLRNAAGQLGYFPIFPWIDSVTNVLDLMVQGLTGQKSGLSETKESQFRNMLTTSLMAVRRIALKDYQSTINDAGDDVNIKEEDYLQQHPEAKPVIVIDRFEGKADINSFVYKELADWAAMLVQMNIAHVIFLTETVAANQRLSESLPNQVFKTMILSDASKANSRNYVLSELVEHYHKSLKRAKKAEEDEPTEKASPEHSQYDENDPRRYLSEELIQDIDDSLEPLGGRMLDLQAFVRRVKFGELPKEALDKMIEQASEQITQIFLSDKIDPLKSAQAWELIDLLSKNGKVYFHDIVFRPLFKAAPEIGILELENNGLITVSRDRGVLKEIRPFKPLYRAAFQYLIDDEDLKTVLMTRYHLKVINFETGRIKKWEEELRALGKINDQKLFKSRLDYLSKKITTSSDVINHCEDEIKKLSQESNNRRK</sequence>
<name>YME2_CANGA</name>
<protein>
    <recommendedName>
        <fullName>Mitochondrial escape protein 2</fullName>
    </recommendedName>
</protein>
<evidence type="ECO:0000250" key="1"/>
<evidence type="ECO:0000255" key="2"/>
<evidence type="ECO:0000256" key="3">
    <source>
        <dbReference type="SAM" id="MobiDB-lite"/>
    </source>
</evidence>
<evidence type="ECO:0000305" key="4"/>
<dbReference type="EMBL" id="CR380959">
    <property type="protein sequence ID" value="CAG62922.1"/>
    <property type="molecule type" value="Genomic_DNA"/>
</dbReference>
<dbReference type="RefSeq" id="XP_449942.1">
    <property type="nucleotide sequence ID" value="XM_449942.1"/>
</dbReference>
<dbReference type="FunCoup" id="Q6FIK2">
    <property type="interactions" value="168"/>
</dbReference>
<dbReference type="STRING" id="284593.Q6FIK2"/>
<dbReference type="EnsemblFungi" id="CAGL0M13761g-T">
    <property type="protein sequence ID" value="CAGL0M13761g-T-p1"/>
    <property type="gene ID" value="CAGL0M13761g"/>
</dbReference>
<dbReference type="KEGG" id="cgr:2891233"/>
<dbReference type="CGD" id="CAL0137425">
    <property type="gene designation" value="CAGL0M13761g"/>
</dbReference>
<dbReference type="VEuPathDB" id="FungiDB:CAGL0M13761g"/>
<dbReference type="eggNOG" id="ENOG502QS0P">
    <property type="taxonomic scope" value="Eukaryota"/>
</dbReference>
<dbReference type="HOGENOM" id="CLU_007861_1_0_1"/>
<dbReference type="InParanoid" id="Q6FIK2"/>
<dbReference type="OMA" id="WTPEQAW"/>
<dbReference type="Proteomes" id="UP000002428">
    <property type="component" value="Chromosome M"/>
</dbReference>
<dbReference type="GO" id="GO:0005743">
    <property type="term" value="C:mitochondrial inner membrane"/>
    <property type="evidence" value="ECO:0007669"/>
    <property type="project" value="UniProtKB-SubCell"/>
</dbReference>
<dbReference type="GO" id="GO:0003723">
    <property type="term" value="F:RNA binding"/>
    <property type="evidence" value="ECO:0007669"/>
    <property type="project" value="UniProtKB-KW"/>
</dbReference>
<dbReference type="GO" id="GO:0000002">
    <property type="term" value="P:mitochondrial genome maintenance"/>
    <property type="evidence" value="ECO:0007669"/>
    <property type="project" value="EnsemblFungi"/>
</dbReference>
<dbReference type="GO" id="GO:0006397">
    <property type="term" value="P:mRNA processing"/>
    <property type="evidence" value="ECO:0007669"/>
    <property type="project" value="UniProtKB-KW"/>
</dbReference>
<dbReference type="CDD" id="cd12433">
    <property type="entry name" value="RRM_Yme2p_like"/>
    <property type="match status" value="1"/>
</dbReference>
<dbReference type="Gene3D" id="3.30.70.330">
    <property type="match status" value="1"/>
</dbReference>
<dbReference type="Gene3D" id="3.40.50.300">
    <property type="entry name" value="P-loop containing nucleotide triphosphate hydrolases"/>
    <property type="match status" value="1"/>
</dbReference>
<dbReference type="InterPro" id="IPR018850">
    <property type="entry name" value="Mt_escape_2_C"/>
</dbReference>
<dbReference type="InterPro" id="IPR012677">
    <property type="entry name" value="Nucleotide-bd_a/b_plait_sf"/>
</dbReference>
<dbReference type="InterPro" id="IPR027417">
    <property type="entry name" value="P-loop_NTPase"/>
</dbReference>
<dbReference type="InterPro" id="IPR035979">
    <property type="entry name" value="RBD_domain_sf"/>
</dbReference>
<dbReference type="InterPro" id="IPR000504">
    <property type="entry name" value="RRM_dom"/>
</dbReference>
<dbReference type="InterPro" id="IPR039627">
    <property type="entry name" value="Yme2_C"/>
</dbReference>
<dbReference type="InterPro" id="IPR034260">
    <property type="entry name" value="Yme2_RRM"/>
</dbReference>
<dbReference type="PANTHER" id="PTHR32198">
    <property type="entry name" value="MITOCHONDRIAL ESCAPE PROTEIN 2"/>
    <property type="match status" value="1"/>
</dbReference>
<dbReference type="PANTHER" id="PTHR32198:SF2">
    <property type="entry name" value="MITOCHONDRIAL ESCAPE PROTEIN 2"/>
    <property type="match status" value="1"/>
</dbReference>
<dbReference type="Pfam" id="PF10443">
    <property type="entry name" value="RNA12"/>
    <property type="match status" value="1"/>
</dbReference>
<dbReference type="Pfam" id="PF00076">
    <property type="entry name" value="RRM_1"/>
    <property type="match status" value="1"/>
</dbReference>
<dbReference type="SMART" id="SM00360">
    <property type="entry name" value="RRM"/>
    <property type="match status" value="1"/>
</dbReference>
<dbReference type="SUPFAM" id="SSF54928">
    <property type="entry name" value="RNA-binding domain, RBD"/>
    <property type="match status" value="1"/>
</dbReference>
<organism>
    <name type="scientific">Candida glabrata (strain ATCC 2001 / BCRC 20586 / JCM 3761 / NBRC 0622 / NRRL Y-65 / CBS 138)</name>
    <name type="common">Yeast</name>
    <name type="synonym">Nakaseomyces glabratus</name>
    <dbReference type="NCBI Taxonomy" id="284593"/>
    <lineage>
        <taxon>Eukaryota</taxon>
        <taxon>Fungi</taxon>
        <taxon>Dikarya</taxon>
        <taxon>Ascomycota</taxon>
        <taxon>Saccharomycotina</taxon>
        <taxon>Saccharomycetes</taxon>
        <taxon>Saccharomycetales</taxon>
        <taxon>Saccharomycetaceae</taxon>
        <taxon>Nakaseomyces</taxon>
    </lineage>
</organism>
<comment type="function">
    <text evidence="1">Plays a role in maintaining the mitochondrial genome and in controlling the mtDNA escape. Involved in the regulation of mtDNA nucleotide structure and number. May have a dispensable role in early maturation of pre-rRNA (By similarity).</text>
</comment>
<comment type="subcellular location">
    <subcellularLocation>
        <location evidence="1">Mitochondrion inner membrane</location>
        <topology evidence="1">Single-pass membrane protein</topology>
    </subcellularLocation>
</comment>
<comment type="similarity">
    <text evidence="4">Belongs to the YME2 family.</text>
</comment>